<evidence type="ECO:0000255" key="1">
    <source>
        <dbReference type="HAMAP-Rule" id="MF_01347"/>
    </source>
</evidence>
<accession>A7FPE0</accession>
<gene>
    <name evidence="1" type="primary">atpD</name>
    <name type="ordered locus">YpsIP31758_4176</name>
</gene>
<proteinExistence type="inferred from homology"/>
<reference key="1">
    <citation type="journal article" date="2007" name="PLoS Genet.">
        <title>The complete genome sequence of Yersinia pseudotuberculosis IP31758, the causative agent of Far East scarlet-like fever.</title>
        <authorList>
            <person name="Eppinger M."/>
            <person name="Rosovitz M.J."/>
            <person name="Fricke W.F."/>
            <person name="Rasko D.A."/>
            <person name="Kokorina G."/>
            <person name="Fayolle C."/>
            <person name="Lindler L.E."/>
            <person name="Carniel E."/>
            <person name="Ravel J."/>
        </authorList>
    </citation>
    <scope>NUCLEOTIDE SEQUENCE [LARGE SCALE GENOMIC DNA]</scope>
    <source>
        <strain>IP 31758</strain>
    </source>
</reference>
<dbReference type="EC" id="7.1.2.2" evidence="1"/>
<dbReference type="EMBL" id="CP000720">
    <property type="protein sequence ID" value="ABS47467.1"/>
    <property type="molecule type" value="Genomic_DNA"/>
</dbReference>
<dbReference type="RefSeq" id="WP_002220753.1">
    <property type="nucleotide sequence ID" value="NC_009708.1"/>
</dbReference>
<dbReference type="SMR" id="A7FPE0"/>
<dbReference type="GeneID" id="57974603"/>
<dbReference type="KEGG" id="ypi:YpsIP31758_4176"/>
<dbReference type="HOGENOM" id="CLU_022398_0_2_6"/>
<dbReference type="Proteomes" id="UP000002412">
    <property type="component" value="Chromosome"/>
</dbReference>
<dbReference type="GO" id="GO:0005886">
    <property type="term" value="C:plasma membrane"/>
    <property type="evidence" value="ECO:0007669"/>
    <property type="project" value="UniProtKB-SubCell"/>
</dbReference>
<dbReference type="GO" id="GO:0045259">
    <property type="term" value="C:proton-transporting ATP synthase complex"/>
    <property type="evidence" value="ECO:0007669"/>
    <property type="project" value="UniProtKB-KW"/>
</dbReference>
<dbReference type="GO" id="GO:0005524">
    <property type="term" value="F:ATP binding"/>
    <property type="evidence" value="ECO:0007669"/>
    <property type="project" value="UniProtKB-UniRule"/>
</dbReference>
<dbReference type="GO" id="GO:0016887">
    <property type="term" value="F:ATP hydrolysis activity"/>
    <property type="evidence" value="ECO:0007669"/>
    <property type="project" value="InterPro"/>
</dbReference>
<dbReference type="GO" id="GO:0046933">
    <property type="term" value="F:proton-transporting ATP synthase activity, rotational mechanism"/>
    <property type="evidence" value="ECO:0007669"/>
    <property type="project" value="UniProtKB-UniRule"/>
</dbReference>
<dbReference type="CDD" id="cd18110">
    <property type="entry name" value="ATP-synt_F1_beta_C"/>
    <property type="match status" value="1"/>
</dbReference>
<dbReference type="CDD" id="cd18115">
    <property type="entry name" value="ATP-synt_F1_beta_N"/>
    <property type="match status" value="1"/>
</dbReference>
<dbReference type="CDD" id="cd01133">
    <property type="entry name" value="F1-ATPase_beta_CD"/>
    <property type="match status" value="1"/>
</dbReference>
<dbReference type="FunFam" id="1.10.1140.10:FF:000001">
    <property type="entry name" value="ATP synthase subunit beta"/>
    <property type="match status" value="1"/>
</dbReference>
<dbReference type="FunFam" id="2.40.10.170:FF:000003">
    <property type="entry name" value="ATP synthase subunit beta"/>
    <property type="match status" value="1"/>
</dbReference>
<dbReference type="FunFam" id="3.40.50.300:FF:000004">
    <property type="entry name" value="ATP synthase subunit beta"/>
    <property type="match status" value="1"/>
</dbReference>
<dbReference type="Gene3D" id="2.40.10.170">
    <property type="match status" value="1"/>
</dbReference>
<dbReference type="Gene3D" id="1.10.1140.10">
    <property type="entry name" value="Bovine Mitochondrial F1-atpase, Atp Synthase Beta Chain, Chain D, domain 3"/>
    <property type="match status" value="1"/>
</dbReference>
<dbReference type="Gene3D" id="3.40.50.300">
    <property type="entry name" value="P-loop containing nucleotide triphosphate hydrolases"/>
    <property type="match status" value="1"/>
</dbReference>
<dbReference type="HAMAP" id="MF_01347">
    <property type="entry name" value="ATP_synth_beta_bact"/>
    <property type="match status" value="1"/>
</dbReference>
<dbReference type="InterPro" id="IPR003593">
    <property type="entry name" value="AAA+_ATPase"/>
</dbReference>
<dbReference type="InterPro" id="IPR055190">
    <property type="entry name" value="ATP-synt_VA_C"/>
</dbReference>
<dbReference type="InterPro" id="IPR005722">
    <property type="entry name" value="ATP_synth_F1_bsu"/>
</dbReference>
<dbReference type="InterPro" id="IPR020003">
    <property type="entry name" value="ATPase_a/bsu_AS"/>
</dbReference>
<dbReference type="InterPro" id="IPR050053">
    <property type="entry name" value="ATPase_alpha/beta_chains"/>
</dbReference>
<dbReference type="InterPro" id="IPR004100">
    <property type="entry name" value="ATPase_F1/V1/A1_a/bsu_N"/>
</dbReference>
<dbReference type="InterPro" id="IPR036121">
    <property type="entry name" value="ATPase_F1/V1/A1_a/bsu_N_sf"/>
</dbReference>
<dbReference type="InterPro" id="IPR000194">
    <property type="entry name" value="ATPase_F1/V1/A1_a/bsu_nucl-bd"/>
</dbReference>
<dbReference type="InterPro" id="IPR024034">
    <property type="entry name" value="ATPase_F1/V1_b/a_C"/>
</dbReference>
<dbReference type="InterPro" id="IPR027417">
    <property type="entry name" value="P-loop_NTPase"/>
</dbReference>
<dbReference type="NCBIfam" id="TIGR01039">
    <property type="entry name" value="atpD"/>
    <property type="match status" value="1"/>
</dbReference>
<dbReference type="PANTHER" id="PTHR15184">
    <property type="entry name" value="ATP SYNTHASE"/>
    <property type="match status" value="1"/>
</dbReference>
<dbReference type="PANTHER" id="PTHR15184:SF71">
    <property type="entry name" value="ATP SYNTHASE SUBUNIT BETA, MITOCHONDRIAL"/>
    <property type="match status" value="1"/>
</dbReference>
<dbReference type="Pfam" id="PF00006">
    <property type="entry name" value="ATP-synt_ab"/>
    <property type="match status" value="1"/>
</dbReference>
<dbReference type="Pfam" id="PF02874">
    <property type="entry name" value="ATP-synt_ab_N"/>
    <property type="match status" value="1"/>
</dbReference>
<dbReference type="Pfam" id="PF22919">
    <property type="entry name" value="ATP-synt_VA_C"/>
    <property type="match status" value="1"/>
</dbReference>
<dbReference type="SMART" id="SM00382">
    <property type="entry name" value="AAA"/>
    <property type="match status" value="1"/>
</dbReference>
<dbReference type="SUPFAM" id="SSF47917">
    <property type="entry name" value="C-terminal domain of alpha and beta subunits of F1 ATP synthase"/>
    <property type="match status" value="1"/>
</dbReference>
<dbReference type="SUPFAM" id="SSF50615">
    <property type="entry name" value="N-terminal domain of alpha and beta subunits of F1 ATP synthase"/>
    <property type="match status" value="1"/>
</dbReference>
<dbReference type="SUPFAM" id="SSF52540">
    <property type="entry name" value="P-loop containing nucleoside triphosphate hydrolases"/>
    <property type="match status" value="1"/>
</dbReference>
<dbReference type="PROSITE" id="PS00152">
    <property type="entry name" value="ATPASE_ALPHA_BETA"/>
    <property type="match status" value="1"/>
</dbReference>
<keyword id="KW-0066">ATP synthesis</keyword>
<keyword id="KW-0067">ATP-binding</keyword>
<keyword id="KW-0997">Cell inner membrane</keyword>
<keyword id="KW-1003">Cell membrane</keyword>
<keyword id="KW-0139">CF(1)</keyword>
<keyword id="KW-0375">Hydrogen ion transport</keyword>
<keyword id="KW-0406">Ion transport</keyword>
<keyword id="KW-0472">Membrane</keyword>
<keyword id="KW-0547">Nucleotide-binding</keyword>
<keyword id="KW-1278">Translocase</keyword>
<keyword id="KW-0813">Transport</keyword>
<organism>
    <name type="scientific">Yersinia pseudotuberculosis serotype O:1b (strain IP 31758)</name>
    <dbReference type="NCBI Taxonomy" id="349747"/>
    <lineage>
        <taxon>Bacteria</taxon>
        <taxon>Pseudomonadati</taxon>
        <taxon>Pseudomonadota</taxon>
        <taxon>Gammaproteobacteria</taxon>
        <taxon>Enterobacterales</taxon>
        <taxon>Yersiniaceae</taxon>
        <taxon>Yersinia</taxon>
    </lineage>
</organism>
<name>ATPB_YERP3</name>
<protein>
    <recommendedName>
        <fullName evidence="1">ATP synthase subunit beta</fullName>
        <ecNumber evidence="1">7.1.2.2</ecNumber>
    </recommendedName>
    <alternativeName>
        <fullName evidence="1">ATP synthase F1 sector subunit beta</fullName>
    </alternativeName>
    <alternativeName>
        <fullName evidence="1">F-ATPase subunit beta</fullName>
    </alternativeName>
</protein>
<sequence length="460" mass="50127">MATGKIIQVIGAVVDVEFPQDAVPKVYNALEVEGTTEKLVLEVQQQLGGGVVRCIAMGSSDGLSRGLKVTNLEHPIEVPVGKATLGRIMNVLGEPIDMKGPIGEEERWAIHREAPSYEELASSQDLLETGIKVMDLICPFAKGGKVGLFGGAGVGKTVNMMELIRNIAIEHSGYSVFAGVGERTREGNDFYHEMTDSNVLDKVSLVYGQMNEPPGNRLRVALTGLTMAEKFRDEGRDVLLFIDNIYRYTLAGTEVSALLGRMPSAVGYQPTLAEEMGVLQERITSTKTGSITSVQAVYVPADDLTDPSPATTFAHLDATVVLSRQIASLGIYPAVDPLDSTSRQLDPLVVGQEHYDVARGVQSILQRYQELKDIIAILGMDELSEDDKLVVSRARKIQRFLSQPFFVAEVFTGSPGKFVSLKDTIRGFKGIMNGDYDHLPEQAFYMVGTIEEAVEKAKKL</sequence>
<comment type="function">
    <text evidence="1">Produces ATP from ADP in the presence of a proton gradient across the membrane. The catalytic sites are hosted primarily by the beta subunits.</text>
</comment>
<comment type="catalytic activity">
    <reaction evidence="1">
        <text>ATP + H2O + 4 H(+)(in) = ADP + phosphate + 5 H(+)(out)</text>
        <dbReference type="Rhea" id="RHEA:57720"/>
        <dbReference type="ChEBI" id="CHEBI:15377"/>
        <dbReference type="ChEBI" id="CHEBI:15378"/>
        <dbReference type="ChEBI" id="CHEBI:30616"/>
        <dbReference type="ChEBI" id="CHEBI:43474"/>
        <dbReference type="ChEBI" id="CHEBI:456216"/>
        <dbReference type="EC" id="7.1.2.2"/>
    </reaction>
</comment>
<comment type="subunit">
    <text evidence="1">F-type ATPases have 2 components, CF(1) - the catalytic core - and CF(0) - the membrane proton channel. CF(1) has five subunits: alpha(3), beta(3), gamma(1), delta(1), epsilon(1). CF(0) has three main subunits: a(1), b(2) and c(9-12). The alpha and beta chains form an alternating ring which encloses part of the gamma chain. CF(1) is attached to CF(0) by a central stalk formed by the gamma and epsilon chains, while a peripheral stalk is formed by the delta and b chains.</text>
</comment>
<comment type="subcellular location">
    <subcellularLocation>
        <location evidence="1">Cell inner membrane</location>
        <topology evidence="1">Peripheral membrane protein</topology>
    </subcellularLocation>
</comment>
<comment type="similarity">
    <text evidence="1">Belongs to the ATPase alpha/beta chains family.</text>
</comment>
<feature type="chain" id="PRO_1000067732" description="ATP synthase subunit beta">
    <location>
        <begin position="1"/>
        <end position="460"/>
    </location>
</feature>
<feature type="binding site" evidence="1">
    <location>
        <begin position="150"/>
        <end position="157"/>
    </location>
    <ligand>
        <name>ATP</name>
        <dbReference type="ChEBI" id="CHEBI:30616"/>
    </ligand>
</feature>